<protein>
    <recommendedName>
        <fullName>Phosphatidylglycerol/phosphatidylinositol transfer protein</fullName>
        <shortName>PG/PI-TP</shortName>
    </recommendedName>
</protein>
<sequence>MKFLSTAAALLVCLAPVSTTARSLDFFKSSQSPIQAQAKSVPGNNPLEYCNDPSGDILDIKQVDLSPNPPLPGKTLAITASGTLREKIEDGAYVLLEVKYGLITLVRQTADLCEQLVNVELKCPLGPGDMTLTKQVDLPKQIPPGKYTVQADVFNSDGEHITCLKALNIEFKGPF</sequence>
<evidence type="ECO:0000255" key="1"/>
<evidence type="ECO:0000269" key="2">
    <source>
    </source>
</evidence>
<evidence type="ECO:0000269" key="3">
    <source>
    </source>
</evidence>
<evidence type="ECO:0000269" key="4">
    <source>
    </source>
</evidence>
<evidence type="ECO:0000305" key="5"/>
<comment type="function">
    <text evidence="2">Catalyzes the intermembrane transfer of phosphatidylglycerol and phosphatidylinositol.</text>
</comment>
<comment type="biophysicochemical properties">
    <phDependence>
        <text evidence="3">Optimum pH is 4-7.</text>
    </phDependence>
    <temperatureDependence>
        <text evidence="3">Optimum temperature is 25-30 degrees Celsius.</text>
    </temperatureDependence>
</comment>
<comment type="subunit">
    <text evidence="3">Monomer.</text>
</comment>
<comment type="subcellular location">
    <subcellularLocation>
        <location evidence="4">Cytoplasm</location>
    </subcellularLocation>
    <subcellularLocation>
        <location evidence="4">Cytoplasmic vesicle</location>
    </subcellularLocation>
    <subcellularLocation>
        <location evidence="4">Golgi apparatus</location>
    </subcellularLocation>
    <text>Also associated with Golgi-like vesicles.</text>
</comment>
<comment type="similarity">
    <text evidence="5">Belongs to the NPC2 family.</text>
</comment>
<reference key="1">
    <citation type="journal article" date="1999" name="Biochim. Biophys. Acta">
        <title>Characterization and expression of the cDNA encoding a new kind of phospholipid transfer protein, the phosphatidylglycerol/phosphatidylinositol transfer protein from Aspergillus oryzae: evidence of a putative membrane targeted phospholipid transfer protein in fungi.</title>
        <authorList>
            <person name="Record E."/>
            <person name="Moukha S."/>
            <person name="Asther M."/>
        </authorList>
    </citation>
    <scope>NUCLEOTIDE SEQUENCE [MRNA]</scope>
    <scope>FUNCTION</scope>
    <source>
        <strain>LMTC 2.14</strain>
    </source>
</reference>
<reference key="2">
    <citation type="journal article" date="2001" name="Gene">
        <title>Cloning and expression in phospholipid containing cultures of the gene encoding the specific phosphatidylglycerol/phosphatidylinositol transfer protein from Aspergillus oryzae: evidence that the pg/pi-tp is tandemly arranged with the putative 3-ketoacyl-CoA thiolase gene.</title>
        <authorList>
            <person name="Record E."/>
            <person name="Moukha S."/>
            <person name="Asther M."/>
            <person name="Asther M."/>
        </authorList>
    </citation>
    <scope>NUCLEOTIDE SEQUENCE [GENOMIC DNA]</scope>
    <source>
        <strain>LMTC 2.14</strain>
    </source>
</reference>
<reference key="3">
    <citation type="journal article" date="2005" name="Nature">
        <title>Genome sequencing and analysis of Aspergillus oryzae.</title>
        <authorList>
            <person name="Machida M."/>
            <person name="Asai K."/>
            <person name="Sano M."/>
            <person name="Tanaka T."/>
            <person name="Kumagai T."/>
            <person name="Terai G."/>
            <person name="Kusumoto K."/>
            <person name="Arima T."/>
            <person name="Akita O."/>
            <person name="Kashiwagi Y."/>
            <person name="Abe K."/>
            <person name="Gomi K."/>
            <person name="Horiuchi H."/>
            <person name="Kitamoto K."/>
            <person name="Kobayashi T."/>
            <person name="Takeuchi M."/>
            <person name="Denning D.W."/>
            <person name="Galagan J.E."/>
            <person name="Nierman W.C."/>
            <person name="Yu J."/>
            <person name="Archer D.B."/>
            <person name="Bennett J.W."/>
            <person name="Bhatnagar D."/>
            <person name="Cleveland T.E."/>
            <person name="Fedorova N.D."/>
            <person name="Gotoh O."/>
            <person name="Horikawa H."/>
            <person name="Hosoyama A."/>
            <person name="Ichinomiya M."/>
            <person name="Igarashi R."/>
            <person name="Iwashita K."/>
            <person name="Juvvadi P.R."/>
            <person name="Kato M."/>
            <person name="Kato Y."/>
            <person name="Kin T."/>
            <person name="Kokubun A."/>
            <person name="Maeda H."/>
            <person name="Maeyama N."/>
            <person name="Maruyama J."/>
            <person name="Nagasaki H."/>
            <person name="Nakajima T."/>
            <person name="Oda K."/>
            <person name="Okada K."/>
            <person name="Paulsen I."/>
            <person name="Sakamoto K."/>
            <person name="Sawano T."/>
            <person name="Takahashi M."/>
            <person name="Takase K."/>
            <person name="Terabayashi Y."/>
            <person name="Wortman J.R."/>
            <person name="Yamada O."/>
            <person name="Yamagata Y."/>
            <person name="Anazawa H."/>
            <person name="Hata Y."/>
            <person name="Koide Y."/>
            <person name="Komori T."/>
            <person name="Koyama Y."/>
            <person name="Minetoki T."/>
            <person name="Suharnan S."/>
            <person name="Tanaka A."/>
            <person name="Isono K."/>
            <person name="Kuhara S."/>
            <person name="Ogasawara N."/>
            <person name="Kikuchi H."/>
        </authorList>
    </citation>
    <scope>NUCLEOTIDE SEQUENCE [LARGE SCALE GENOMIC DNA]</scope>
    <source>
        <strain>ATCC 42149 / RIB 40</strain>
    </source>
</reference>
<reference key="4">
    <citation type="journal article" date="1995" name="Biochim. Biophys. Acta">
        <title>Purification and characterization of a novel specific phosphatidylglycerol-phosphatidylinositol transfer protein with high activity from Aspergillus oryzae.</title>
        <authorList>
            <person name="Record E."/>
            <person name="Asther M."/>
            <person name="Marion D."/>
            <person name="Asther M."/>
        </authorList>
    </citation>
    <scope>PROTEIN SEQUENCE OF 38-65</scope>
    <scope>BIOPHYSICOCHEMICAL PROPERTIES</scope>
    <scope>SUBUNIT</scope>
</reference>
<reference key="5">
    <citation type="journal article" date="1998" name="Can. J. Microbiol.">
        <title>Localization of a phosphatidylglycerol/phosphatidylinositol transfer protein in Aspergillus oryzae.</title>
        <authorList>
            <person name="Record E."/>
            <person name="Asther M."/>
            <person name="Moukha S."/>
            <person name="Marion D."/>
            <person name="Burlat V."/>
            <person name="Ruel K."/>
            <person name="Asther M."/>
        </authorList>
    </citation>
    <scope>SUBCELLULAR LOCATION</scope>
</reference>
<dbReference type="EMBL" id="AF089838">
    <property type="protein sequence ID" value="AAD16095.1"/>
    <property type="molecule type" value="mRNA"/>
</dbReference>
<dbReference type="EMBL" id="AF154412">
    <property type="protein sequence ID" value="AAG13652.1"/>
    <property type="molecule type" value="Genomic_DNA"/>
</dbReference>
<dbReference type="EMBL" id="BA000051">
    <property type="protein sequence ID" value="BAE59953.1"/>
    <property type="molecule type" value="Genomic_DNA"/>
</dbReference>
<dbReference type="RefSeq" id="XP_001821955.1">
    <property type="nucleotide sequence ID" value="XM_001821903.2"/>
</dbReference>
<dbReference type="SMR" id="O94183"/>
<dbReference type="STRING" id="510516.O94183"/>
<dbReference type="EnsemblFungi" id="BAE59953">
    <property type="protein sequence ID" value="BAE59953"/>
    <property type="gene ID" value="AO090026000516"/>
</dbReference>
<dbReference type="GeneID" id="5993983"/>
<dbReference type="KEGG" id="aor:AO090026000516"/>
<dbReference type="VEuPathDB" id="FungiDB:AO090026000516"/>
<dbReference type="HOGENOM" id="CLU_097982_0_0_1"/>
<dbReference type="OMA" id="HQTYDLC"/>
<dbReference type="OrthoDB" id="44008at5052"/>
<dbReference type="Proteomes" id="UP000006564">
    <property type="component" value="Chromosome 3"/>
</dbReference>
<dbReference type="GO" id="GO:0031410">
    <property type="term" value="C:cytoplasmic vesicle"/>
    <property type="evidence" value="ECO:0007669"/>
    <property type="project" value="UniProtKB-KW"/>
</dbReference>
<dbReference type="GO" id="GO:0000328">
    <property type="term" value="C:fungal-type vacuole lumen"/>
    <property type="evidence" value="ECO:0007669"/>
    <property type="project" value="EnsemblFungi"/>
</dbReference>
<dbReference type="GO" id="GO:0005794">
    <property type="term" value="C:Golgi apparatus"/>
    <property type="evidence" value="ECO:0007669"/>
    <property type="project" value="UniProtKB-SubCell"/>
</dbReference>
<dbReference type="GO" id="GO:0031210">
    <property type="term" value="F:phosphatidylcholine binding"/>
    <property type="evidence" value="ECO:0007669"/>
    <property type="project" value="EnsemblFungi"/>
</dbReference>
<dbReference type="GO" id="GO:0035091">
    <property type="term" value="F:phosphatidylinositol binding"/>
    <property type="evidence" value="ECO:0007669"/>
    <property type="project" value="EnsemblFungi"/>
</dbReference>
<dbReference type="GO" id="GO:0001786">
    <property type="term" value="F:phosphatidylserine binding"/>
    <property type="evidence" value="ECO:0007669"/>
    <property type="project" value="EnsemblFungi"/>
</dbReference>
<dbReference type="GO" id="GO:0032934">
    <property type="term" value="F:sterol binding"/>
    <property type="evidence" value="ECO:0007669"/>
    <property type="project" value="EnsemblFungi"/>
</dbReference>
<dbReference type="GO" id="GO:0032366">
    <property type="term" value="P:intracellular sterol transport"/>
    <property type="evidence" value="ECO:0007669"/>
    <property type="project" value="EnsemblFungi"/>
</dbReference>
<dbReference type="CDD" id="cd00917">
    <property type="entry name" value="PG-PI_TP"/>
    <property type="match status" value="1"/>
</dbReference>
<dbReference type="FunFam" id="2.60.40.770:FF:000004">
    <property type="entry name" value="Phosphatidylglycerol/phosphatidylinositol transfer protein"/>
    <property type="match status" value="1"/>
</dbReference>
<dbReference type="Gene3D" id="2.60.40.770">
    <property type="match status" value="1"/>
</dbReference>
<dbReference type="InterPro" id="IPR014756">
    <property type="entry name" value="Ig_E-set"/>
</dbReference>
<dbReference type="InterPro" id="IPR003172">
    <property type="entry name" value="ML_dom"/>
</dbReference>
<dbReference type="InterPro" id="IPR033917">
    <property type="entry name" value="ML_PG-PI_TP"/>
</dbReference>
<dbReference type="InterPro" id="IPR039670">
    <property type="entry name" value="NPC2-like"/>
</dbReference>
<dbReference type="PANTHER" id="PTHR11306">
    <property type="entry name" value="NIEMANN PICK TYPE C2 PROTEIN NPC2-RELATED"/>
    <property type="match status" value="1"/>
</dbReference>
<dbReference type="PANTHER" id="PTHR11306:SF0">
    <property type="entry name" value="PHOSPHATIDYLGLYCEROL_PHOSPHATIDYLINOSITOL TRANSFER PROTEIN"/>
    <property type="match status" value="1"/>
</dbReference>
<dbReference type="Pfam" id="PF02221">
    <property type="entry name" value="E1_DerP2_DerF2"/>
    <property type="match status" value="1"/>
</dbReference>
<dbReference type="SMART" id="SM00737">
    <property type="entry name" value="ML"/>
    <property type="match status" value="1"/>
</dbReference>
<dbReference type="SUPFAM" id="SSF81296">
    <property type="entry name" value="E set domains"/>
    <property type="match status" value="1"/>
</dbReference>
<feature type="signal peptide" evidence="1">
    <location>
        <begin position="1"/>
        <end position="21"/>
    </location>
</feature>
<feature type="propeptide" id="PRO_0000019869" evidence="3">
    <location>
        <begin position="22"/>
        <end position="37"/>
    </location>
</feature>
<feature type="chain" id="PRO_0000019870" description="Phosphatidylglycerol/phosphatidylinositol transfer protein">
    <location>
        <begin position="38"/>
        <end position="175"/>
    </location>
</feature>
<organism>
    <name type="scientific">Aspergillus oryzae (strain ATCC 42149 / RIB 40)</name>
    <name type="common">Yellow koji mold</name>
    <dbReference type="NCBI Taxonomy" id="510516"/>
    <lineage>
        <taxon>Eukaryota</taxon>
        <taxon>Fungi</taxon>
        <taxon>Dikarya</taxon>
        <taxon>Ascomycota</taxon>
        <taxon>Pezizomycotina</taxon>
        <taxon>Eurotiomycetes</taxon>
        <taxon>Eurotiomycetidae</taxon>
        <taxon>Eurotiales</taxon>
        <taxon>Aspergillaceae</taxon>
        <taxon>Aspergillus</taxon>
        <taxon>Aspergillus subgen. Circumdati</taxon>
    </lineage>
</organism>
<accession>O94183</accession>
<accession>Q2UER2</accession>
<gene>
    <name type="primary">pltp</name>
    <name type="synonym">pg/pi-tp</name>
    <name type="ORF">AO090026000516</name>
</gene>
<keyword id="KW-0963">Cytoplasm</keyword>
<keyword id="KW-0968">Cytoplasmic vesicle</keyword>
<keyword id="KW-0903">Direct protein sequencing</keyword>
<keyword id="KW-0333">Golgi apparatus</keyword>
<keyword id="KW-0445">Lipid transport</keyword>
<keyword id="KW-1185">Reference proteome</keyword>
<keyword id="KW-0732">Signal</keyword>
<keyword id="KW-0813">Transport</keyword>
<name>NPC2_ASPOR</name>
<proteinExistence type="evidence at protein level"/>